<proteinExistence type="inferred from homology"/>
<protein>
    <recommendedName>
        <fullName>NADH-ubiquinone oxidoreductase chain 5</fullName>
        <ecNumber evidence="1">7.1.1.2</ecNumber>
    </recommendedName>
    <alternativeName>
        <fullName>NADH dehydrogenase subunit 5</fullName>
    </alternativeName>
</protein>
<accession>O79437</accession>
<name>NU5M_RABIT</name>
<comment type="function">
    <text evidence="1">Core subunit of the mitochondrial membrane respiratory chain NADH dehydrogenase (Complex I) which catalyzes electron transfer from NADH through the respiratory chain, using ubiquinone as an electron acceptor. Essential for the catalytic activity and assembly of complex I.</text>
</comment>
<comment type="catalytic activity">
    <reaction evidence="1">
        <text>a ubiquinone + NADH + 5 H(+)(in) = a ubiquinol + NAD(+) + 4 H(+)(out)</text>
        <dbReference type="Rhea" id="RHEA:29091"/>
        <dbReference type="Rhea" id="RHEA-COMP:9565"/>
        <dbReference type="Rhea" id="RHEA-COMP:9566"/>
        <dbReference type="ChEBI" id="CHEBI:15378"/>
        <dbReference type="ChEBI" id="CHEBI:16389"/>
        <dbReference type="ChEBI" id="CHEBI:17976"/>
        <dbReference type="ChEBI" id="CHEBI:57540"/>
        <dbReference type="ChEBI" id="CHEBI:57945"/>
        <dbReference type="EC" id="7.1.1.2"/>
    </reaction>
</comment>
<comment type="subunit">
    <text evidence="2">Core subunit of respiratory chain NADH dehydrogenase (Complex I) which is composed of 45 different subunits.</text>
</comment>
<comment type="subcellular location">
    <subcellularLocation>
        <location evidence="2">Mitochondrion inner membrane</location>
        <topology evidence="3">Multi-pass membrane protein</topology>
    </subcellularLocation>
</comment>
<comment type="similarity">
    <text evidence="4">Belongs to the complex I subunit 5 family.</text>
</comment>
<feature type="chain" id="PRO_0000118140" description="NADH-ubiquinone oxidoreductase chain 5">
    <location>
        <begin position="1"/>
        <end position="603"/>
    </location>
</feature>
<feature type="transmembrane region" description="Helical" evidence="3">
    <location>
        <begin position="3"/>
        <end position="23"/>
    </location>
</feature>
<feature type="transmembrane region" description="Helical" evidence="3">
    <location>
        <begin position="38"/>
        <end position="58"/>
    </location>
</feature>
<feature type="transmembrane region" description="Helical" evidence="3">
    <location>
        <begin position="87"/>
        <end position="107"/>
    </location>
</feature>
<feature type="transmembrane region" description="Helical" evidence="3">
    <location>
        <begin position="114"/>
        <end position="134"/>
    </location>
</feature>
<feature type="transmembrane region" description="Helical" evidence="3">
    <location>
        <begin position="138"/>
        <end position="158"/>
    </location>
</feature>
<feature type="transmembrane region" description="Helical" evidence="3">
    <location>
        <begin position="171"/>
        <end position="191"/>
    </location>
</feature>
<feature type="transmembrane region" description="Helical" evidence="3">
    <location>
        <begin position="201"/>
        <end position="221"/>
    </location>
</feature>
<feature type="transmembrane region" description="Helical" evidence="3">
    <location>
        <begin position="241"/>
        <end position="261"/>
    </location>
</feature>
<feature type="transmembrane region" description="Helical" evidence="3">
    <location>
        <begin position="273"/>
        <end position="293"/>
    </location>
</feature>
<feature type="transmembrane region" description="Helical" evidence="3">
    <location>
        <begin position="301"/>
        <end position="320"/>
    </location>
</feature>
<feature type="transmembrane region" description="Helical" evidence="3">
    <location>
        <begin position="325"/>
        <end position="347"/>
    </location>
</feature>
<feature type="transmembrane region" description="Helical" evidence="3">
    <location>
        <begin position="366"/>
        <end position="386"/>
    </location>
</feature>
<feature type="transmembrane region" description="Helical" evidence="3">
    <location>
        <begin position="409"/>
        <end position="429"/>
    </location>
</feature>
<feature type="transmembrane region" description="Helical" evidence="3">
    <location>
        <begin position="457"/>
        <end position="477"/>
    </location>
</feature>
<feature type="transmembrane region" description="Helical" evidence="3">
    <location>
        <begin position="482"/>
        <end position="502"/>
    </location>
</feature>
<feature type="transmembrane region" description="Helical" evidence="3">
    <location>
        <begin position="582"/>
        <end position="602"/>
    </location>
</feature>
<organism>
    <name type="scientific">Oryctolagus cuniculus</name>
    <name type="common">Rabbit</name>
    <dbReference type="NCBI Taxonomy" id="9986"/>
    <lineage>
        <taxon>Eukaryota</taxon>
        <taxon>Metazoa</taxon>
        <taxon>Chordata</taxon>
        <taxon>Craniata</taxon>
        <taxon>Vertebrata</taxon>
        <taxon>Euteleostomi</taxon>
        <taxon>Mammalia</taxon>
        <taxon>Eutheria</taxon>
        <taxon>Euarchontoglires</taxon>
        <taxon>Glires</taxon>
        <taxon>Lagomorpha</taxon>
        <taxon>Leporidae</taxon>
        <taxon>Oryctolagus</taxon>
    </lineage>
</organism>
<reference key="1">
    <citation type="journal article" date="1998" name="Genomics">
        <title>The complete mitochondrial DNA sequence of the rabbit, Oryctolagus cuniculus.</title>
        <authorList>
            <person name="Gissi C."/>
            <person name="Gullberg A."/>
            <person name="Arnason U."/>
        </authorList>
    </citation>
    <scope>NUCLEOTIDE SEQUENCE [LARGE SCALE GENOMIC DNA]</scope>
    <source>
        <strain evidence="5">Thorbecke</strain>
    </source>
</reference>
<evidence type="ECO:0000250" key="1">
    <source>
        <dbReference type="UniProtKB" id="P03915"/>
    </source>
</evidence>
<evidence type="ECO:0000250" key="2">
    <source>
        <dbReference type="UniProtKB" id="P03920"/>
    </source>
</evidence>
<evidence type="ECO:0000255" key="3"/>
<evidence type="ECO:0000305" key="4"/>
<evidence type="ECO:0000312" key="5">
    <source>
        <dbReference type="Proteomes" id="UP000001811"/>
    </source>
</evidence>
<keyword id="KW-0249">Electron transport</keyword>
<keyword id="KW-0472">Membrane</keyword>
<keyword id="KW-0496">Mitochondrion</keyword>
<keyword id="KW-0999">Mitochondrion inner membrane</keyword>
<keyword id="KW-0520">NAD</keyword>
<keyword id="KW-1185">Reference proteome</keyword>
<keyword id="KW-0679">Respiratory chain</keyword>
<keyword id="KW-1278">Translocase</keyword>
<keyword id="KW-0812">Transmembrane</keyword>
<keyword id="KW-1133">Transmembrane helix</keyword>
<keyword id="KW-0813">Transport</keyword>
<keyword id="KW-0830">Ubiquinone</keyword>
<geneLocation type="mitochondrion"/>
<gene>
    <name type="primary">MT-ND5</name>
    <name type="synonym">MTND5</name>
    <name type="synonym">NADH5</name>
    <name type="synonym">ND5</name>
</gene>
<dbReference type="EC" id="7.1.1.2" evidence="1"/>
<dbReference type="EMBL" id="AJ001588">
    <property type="protein sequence ID" value="CAA04857.1"/>
    <property type="molecule type" value="Genomic_DNA"/>
</dbReference>
<dbReference type="PIR" id="T11490">
    <property type="entry name" value="T11490"/>
</dbReference>
<dbReference type="RefSeq" id="NP_007559.1">
    <property type="nucleotide sequence ID" value="NC_001913.1"/>
</dbReference>
<dbReference type="SMR" id="O79437"/>
<dbReference type="FunCoup" id="O79437">
    <property type="interactions" value="70"/>
</dbReference>
<dbReference type="STRING" id="9986.ENSOCUP00000026189"/>
<dbReference type="PaxDb" id="9986-ENSOCUP00000026189"/>
<dbReference type="Ensembl" id="ENSOCUT00000033137.1">
    <property type="protein sequence ID" value="ENSOCUP00000026189.2"/>
    <property type="gene ID" value="ENSOCUG00000029112.1"/>
</dbReference>
<dbReference type="GeneID" id="808224"/>
<dbReference type="KEGG" id="ocu:808224"/>
<dbReference type="CTD" id="4540"/>
<dbReference type="eggNOG" id="KOG4668">
    <property type="taxonomic scope" value="Eukaryota"/>
</dbReference>
<dbReference type="GeneTree" id="ENSGT00730000111303"/>
<dbReference type="HOGENOM" id="CLU_007100_6_0_1"/>
<dbReference type="InParanoid" id="O79437"/>
<dbReference type="OMA" id="GVGIMSF"/>
<dbReference type="OrthoDB" id="10069788at2759"/>
<dbReference type="Proteomes" id="UP000001811">
    <property type="component" value="Mitochondrion"/>
</dbReference>
<dbReference type="Bgee" id="ENSOCUG00000029112">
    <property type="expression patterns" value="Expressed in prefrontal cortex and 16 other cell types or tissues"/>
</dbReference>
<dbReference type="ExpressionAtlas" id="O79437">
    <property type="expression patterns" value="baseline"/>
</dbReference>
<dbReference type="GO" id="GO:0005743">
    <property type="term" value="C:mitochondrial inner membrane"/>
    <property type="evidence" value="ECO:0000250"/>
    <property type="project" value="UniProtKB"/>
</dbReference>
<dbReference type="GO" id="GO:0045271">
    <property type="term" value="C:respiratory chain complex I"/>
    <property type="evidence" value="ECO:0007669"/>
    <property type="project" value="Ensembl"/>
</dbReference>
<dbReference type="GO" id="GO:0008137">
    <property type="term" value="F:NADH dehydrogenase (ubiquinone) activity"/>
    <property type="evidence" value="ECO:0000250"/>
    <property type="project" value="UniProtKB"/>
</dbReference>
<dbReference type="GO" id="GO:0015990">
    <property type="term" value="P:electron transport coupled proton transport"/>
    <property type="evidence" value="ECO:0007669"/>
    <property type="project" value="TreeGrafter"/>
</dbReference>
<dbReference type="GO" id="GO:0006120">
    <property type="term" value="P:mitochondrial electron transport, NADH to ubiquinone"/>
    <property type="evidence" value="ECO:0000250"/>
    <property type="project" value="UniProtKB"/>
</dbReference>
<dbReference type="GO" id="GO:0032981">
    <property type="term" value="P:mitochondrial respiratory chain complex I assembly"/>
    <property type="evidence" value="ECO:0000250"/>
    <property type="project" value="UniProtKB"/>
</dbReference>
<dbReference type="InterPro" id="IPR010934">
    <property type="entry name" value="NADH_DH_su5_C"/>
</dbReference>
<dbReference type="InterPro" id="IPR018393">
    <property type="entry name" value="NADHpl_OxRdtase_5_subgr"/>
</dbReference>
<dbReference type="InterPro" id="IPR001750">
    <property type="entry name" value="ND/Mrp_TM"/>
</dbReference>
<dbReference type="InterPro" id="IPR003945">
    <property type="entry name" value="NU5C-like"/>
</dbReference>
<dbReference type="InterPro" id="IPR001516">
    <property type="entry name" value="Proton_antipo_N"/>
</dbReference>
<dbReference type="NCBIfam" id="TIGR01974">
    <property type="entry name" value="NDH_I_L"/>
    <property type="match status" value="1"/>
</dbReference>
<dbReference type="PANTHER" id="PTHR42829">
    <property type="entry name" value="NADH-UBIQUINONE OXIDOREDUCTASE CHAIN 5"/>
    <property type="match status" value="1"/>
</dbReference>
<dbReference type="PANTHER" id="PTHR42829:SF2">
    <property type="entry name" value="NADH-UBIQUINONE OXIDOREDUCTASE CHAIN 5"/>
    <property type="match status" value="1"/>
</dbReference>
<dbReference type="Pfam" id="PF06455">
    <property type="entry name" value="NADH5_C"/>
    <property type="match status" value="1"/>
</dbReference>
<dbReference type="Pfam" id="PF00361">
    <property type="entry name" value="Proton_antipo_M"/>
    <property type="match status" value="1"/>
</dbReference>
<dbReference type="Pfam" id="PF00662">
    <property type="entry name" value="Proton_antipo_N"/>
    <property type="match status" value="1"/>
</dbReference>
<dbReference type="PRINTS" id="PR01434">
    <property type="entry name" value="NADHDHGNASE5"/>
</dbReference>
<sequence>MNLFSTSVAVSIIILVLPIVASFTNIFNSPNYPHYVKTSVSYAFTISLIPTLIFIATSQEMMVSNWHWMTIHTLKLTTSFKLDYFSMLFTPIALFVTWSIMEFSMWYMHSDPKINQFFKYLLMFLITMLILVTANNMFQLFIGWEGVGIMSFLLIGWWHGRTDANTAALQAILYNRIGDIGFIMALAWFAINLNTWELQQIFILDNNITILPLMGLILAATGKSAQFGLHPWLPSAMEGPTPVSALLHSSTMVVAGVFLLIRFYPLLENNKTAQTLILCLGAITTLFTALCALTQNDIKKIVAFSTSSQLGLMMVTIGINQPHLAFLHICTHAFFKAMLFLCSGSIIHSLNDEQDIRKMGGLYKTMPFTASALTIGSLALTGMPFLTGFYSKDLIIESANTSNTNAWALIITLIATSLTAVYSTRIIFFALLGQPRYPALIVINENNPLLINSIKRLALGSIFAGFLISNLITPNNVPQMTMPLYMKMTALFVTIMGFTIAMELNQLSLSLKMTTQSPYFNFSNMLGFFPMTIHRILPYLNLSASQNMATLLLDMTWTEKAIPKNISDIQIFASTSVSSQKGLIKLYFLSFLISLLLVLFILT</sequence>